<gene>
    <name type="primary">spsL</name>
    <name type="ordered locus">BSU37810</name>
    <name type="ORF">ipa-73d</name>
</gene>
<evidence type="ECO:0000305" key="1"/>
<organism>
    <name type="scientific">Bacillus subtilis (strain 168)</name>
    <dbReference type="NCBI Taxonomy" id="224308"/>
    <lineage>
        <taxon>Bacteria</taxon>
        <taxon>Bacillati</taxon>
        <taxon>Bacillota</taxon>
        <taxon>Bacilli</taxon>
        <taxon>Bacillales</taxon>
        <taxon>Bacillaceae</taxon>
        <taxon>Bacillus</taxon>
    </lineage>
</organism>
<sequence>MIDGVKVKKLMKHSDDRGFFAELVRDDENLLEHFGQASWSKSYPGVIKAFHYHEKQDDLWFFPTGHAQVVLYDLREDSKTKGETDVYYMGEDNPMLLLIPKGVAHGYRVLGETPLTIIYFTTMSYNPDQPDEKRIPWDDETIGFNWNTEFR</sequence>
<accession>Q7WY56</accession>
<dbReference type="EMBL" id="AL009126">
    <property type="protein sequence ID" value="CAE01469.1"/>
    <property type="molecule type" value="Genomic_DNA"/>
</dbReference>
<dbReference type="RefSeq" id="WP_003242881.1">
    <property type="nucleotide sequence ID" value="NZ_OZ025638.1"/>
</dbReference>
<dbReference type="RefSeq" id="YP_054595.1">
    <property type="nucleotide sequence ID" value="NC_000964.3"/>
</dbReference>
<dbReference type="SMR" id="Q7WY56"/>
<dbReference type="FunCoup" id="Q7WY56">
    <property type="interactions" value="231"/>
</dbReference>
<dbReference type="STRING" id="224308.BSU37810"/>
<dbReference type="PaxDb" id="224308-BSU37810"/>
<dbReference type="EnsemblBacteria" id="CAE01469">
    <property type="protein sequence ID" value="CAE01469"/>
    <property type="gene ID" value="BSU_37810"/>
</dbReference>
<dbReference type="GeneID" id="2914201"/>
<dbReference type="KEGG" id="bsu:BSU37810"/>
<dbReference type="PATRIC" id="fig|224308.179.peg.4094"/>
<dbReference type="eggNOG" id="COG1898">
    <property type="taxonomic scope" value="Bacteria"/>
</dbReference>
<dbReference type="InParanoid" id="Q7WY56"/>
<dbReference type="OrthoDB" id="9800680at2"/>
<dbReference type="PhylomeDB" id="Q7WY56"/>
<dbReference type="BioCyc" id="BSUB:BSU37810-MONOMER"/>
<dbReference type="UniPathway" id="UPA00953"/>
<dbReference type="Proteomes" id="UP000001570">
    <property type="component" value="Chromosome"/>
</dbReference>
<dbReference type="GO" id="GO:0005829">
    <property type="term" value="C:cytosol"/>
    <property type="evidence" value="ECO:0000318"/>
    <property type="project" value="GO_Central"/>
</dbReference>
<dbReference type="GO" id="GO:0008830">
    <property type="term" value="F:dTDP-4-dehydrorhamnose 3,5-epimerase activity"/>
    <property type="evidence" value="ECO:0000318"/>
    <property type="project" value="GO_Central"/>
</dbReference>
<dbReference type="GO" id="GO:0016491">
    <property type="term" value="F:oxidoreductase activity"/>
    <property type="evidence" value="ECO:0007669"/>
    <property type="project" value="UniProtKB-KW"/>
</dbReference>
<dbReference type="GO" id="GO:0019305">
    <property type="term" value="P:dTDP-rhamnose biosynthetic process"/>
    <property type="evidence" value="ECO:0000318"/>
    <property type="project" value="GO_Central"/>
</dbReference>
<dbReference type="GO" id="GO:0000271">
    <property type="term" value="P:polysaccharide biosynthetic process"/>
    <property type="evidence" value="ECO:0000318"/>
    <property type="project" value="GO_Central"/>
</dbReference>
<dbReference type="Gene3D" id="2.60.120.10">
    <property type="entry name" value="Jelly Rolls"/>
    <property type="match status" value="1"/>
</dbReference>
<dbReference type="InterPro" id="IPR000888">
    <property type="entry name" value="RmlC-like"/>
</dbReference>
<dbReference type="InterPro" id="IPR014710">
    <property type="entry name" value="RmlC-like_jellyroll"/>
</dbReference>
<dbReference type="InterPro" id="IPR011051">
    <property type="entry name" value="RmlC_Cupin_sf"/>
</dbReference>
<dbReference type="PANTHER" id="PTHR21047">
    <property type="entry name" value="DTDP-6-DEOXY-D-GLUCOSE-3,5 EPIMERASE"/>
    <property type="match status" value="1"/>
</dbReference>
<dbReference type="PANTHER" id="PTHR21047:SF2">
    <property type="entry name" value="THYMIDINE DIPHOSPHO-4-KETO-RHAMNOSE 3,5-EPIMERASE"/>
    <property type="match status" value="1"/>
</dbReference>
<dbReference type="Pfam" id="PF00908">
    <property type="entry name" value="dTDP_sugar_isom"/>
    <property type="match status" value="1"/>
</dbReference>
<dbReference type="SUPFAM" id="SSF51182">
    <property type="entry name" value="RmlC-like cupins"/>
    <property type="match status" value="1"/>
</dbReference>
<keyword id="KW-0521">NADP</keyword>
<keyword id="KW-0560">Oxidoreductase</keyword>
<keyword id="KW-1185">Reference proteome</keyword>
<reference key="1">
    <citation type="journal article" date="1997" name="Nature">
        <title>The complete genome sequence of the Gram-positive bacterium Bacillus subtilis.</title>
        <authorList>
            <person name="Kunst F."/>
            <person name="Ogasawara N."/>
            <person name="Moszer I."/>
            <person name="Albertini A.M."/>
            <person name="Alloni G."/>
            <person name="Azevedo V."/>
            <person name="Bertero M.G."/>
            <person name="Bessieres P."/>
            <person name="Bolotin A."/>
            <person name="Borchert S."/>
            <person name="Borriss R."/>
            <person name="Boursier L."/>
            <person name="Brans A."/>
            <person name="Braun M."/>
            <person name="Brignell S.C."/>
            <person name="Bron S."/>
            <person name="Brouillet S."/>
            <person name="Bruschi C.V."/>
            <person name="Caldwell B."/>
            <person name="Capuano V."/>
            <person name="Carter N.M."/>
            <person name="Choi S.-K."/>
            <person name="Codani J.-J."/>
            <person name="Connerton I.F."/>
            <person name="Cummings N.J."/>
            <person name="Daniel R.A."/>
            <person name="Denizot F."/>
            <person name="Devine K.M."/>
            <person name="Duesterhoeft A."/>
            <person name="Ehrlich S.D."/>
            <person name="Emmerson P.T."/>
            <person name="Entian K.-D."/>
            <person name="Errington J."/>
            <person name="Fabret C."/>
            <person name="Ferrari E."/>
            <person name="Foulger D."/>
            <person name="Fritz C."/>
            <person name="Fujita M."/>
            <person name="Fujita Y."/>
            <person name="Fuma S."/>
            <person name="Galizzi A."/>
            <person name="Galleron N."/>
            <person name="Ghim S.-Y."/>
            <person name="Glaser P."/>
            <person name="Goffeau A."/>
            <person name="Golightly E.J."/>
            <person name="Grandi G."/>
            <person name="Guiseppi G."/>
            <person name="Guy B.J."/>
            <person name="Haga K."/>
            <person name="Haiech J."/>
            <person name="Harwood C.R."/>
            <person name="Henaut A."/>
            <person name="Hilbert H."/>
            <person name="Holsappel S."/>
            <person name="Hosono S."/>
            <person name="Hullo M.-F."/>
            <person name="Itaya M."/>
            <person name="Jones L.-M."/>
            <person name="Joris B."/>
            <person name="Karamata D."/>
            <person name="Kasahara Y."/>
            <person name="Klaerr-Blanchard M."/>
            <person name="Klein C."/>
            <person name="Kobayashi Y."/>
            <person name="Koetter P."/>
            <person name="Koningstein G."/>
            <person name="Krogh S."/>
            <person name="Kumano M."/>
            <person name="Kurita K."/>
            <person name="Lapidus A."/>
            <person name="Lardinois S."/>
            <person name="Lauber J."/>
            <person name="Lazarevic V."/>
            <person name="Lee S.-M."/>
            <person name="Levine A."/>
            <person name="Liu H."/>
            <person name="Masuda S."/>
            <person name="Mauel C."/>
            <person name="Medigue C."/>
            <person name="Medina N."/>
            <person name="Mellado R.P."/>
            <person name="Mizuno M."/>
            <person name="Moestl D."/>
            <person name="Nakai S."/>
            <person name="Noback M."/>
            <person name="Noone D."/>
            <person name="O'Reilly M."/>
            <person name="Ogawa K."/>
            <person name="Ogiwara A."/>
            <person name="Oudega B."/>
            <person name="Park S.-H."/>
            <person name="Parro V."/>
            <person name="Pohl T.M."/>
            <person name="Portetelle D."/>
            <person name="Porwollik S."/>
            <person name="Prescott A.M."/>
            <person name="Presecan E."/>
            <person name="Pujic P."/>
            <person name="Purnelle B."/>
            <person name="Rapoport G."/>
            <person name="Rey M."/>
            <person name="Reynolds S."/>
            <person name="Rieger M."/>
            <person name="Rivolta C."/>
            <person name="Rocha E."/>
            <person name="Roche B."/>
            <person name="Rose M."/>
            <person name="Sadaie Y."/>
            <person name="Sato T."/>
            <person name="Scanlan E."/>
            <person name="Schleich S."/>
            <person name="Schroeter R."/>
            <person name="Scoffone F."/>
            <person name="Sekiguchi J."/>
            <person name="Sekowska A."/>
            <person name="Seror S.J."/>
            <person name="Serror P."/>
            <person name="Shin B.-S."/>
            <person name="Soldo B."/>
            <person name="Sorokin A."/>
            <person name="Tacconi E."/>
            <person name="Takagi T."/>
            <person name="Takahashi H."/>
            <person name="Takemaru K."/>
            <person name="Takeuchi M."/>
            <person name="Tamakoshi A."/>
            <person name="Tanaka T."/>
            <person name="Terpstra P."/>
            <person name="Tognoni A."/>
            <person name="Tosato V."/>
            <person name="Uchiyama S."/>
            <person name="Vandenbol M."/>
            <person name="Vannier F."/>
            <person name="Vassarotti A."/>
            <person name="Viari A."/>
            <person name="Wambutt R."/>
            <person name="Wedler E."/>
            <person name="Wedler H."/>
            <person name="Weitzenegger T."/>
            <person name="Winters P."/>
            <person name="Wipat A."/>
            <person name="Yamamoto H."/>
            <person name="Yamane K."/>
            <person name="Yasumoto K."/>
            <person name="Yata K."/>
            <person name="Yoshida K."/>
            <person name="Yoshikawa H.-F."/>
            <person name="Zumstein E."/>
            <person name="Yoshikawa H."/>
            <person name="Danchin A."/>
        </authorList>
    </citation>
    <scope>NUCLEOTIDE SEQUENCE [LARGE SCALE GENOMIC DNA]</scope>
    <source>
        <strain>168</strain>
    </source>
</reference>
<comment type="pathway">
    <text>Spore coat biogenesis; spore coat polysaccharide biosynthesis.</text>
</comment>
<comment type="similarity">
    <text evidence="1">To dTDP-4-dehydrorhamnose reductase.</text>
</comment>
<name>SPSL_BACSU</name>
<proteinExistence type="predicted"/>
<feature type="chain" id="PRO_0000072159" description="Spore coat polysaccharide biosynthesis protein SpsL">
    <location>
        <begin position="1"/>
        <end position="151"/>
    </location>
</feature>
<protein>
    <recommendedName>
        <fullName>Spore coat polysaccharide biosynthesis protein SpsL</fullName>
    </recommendedName>
</protein>